<keyword id="KW-0131">Cell cycle</keyword>
<keyword id="KW-0132">Cell division</keyword>
<keyword id="KW-1185">Reference proteome</keyword>
<name>MINE_CLOD6</name>
<sequence>MLDLFRVFSNEAKTSKSVAKERLKLVLVHDRVDCSPQLLEMIKTDILKVIANYAEIEDDGLEIKMSKCRGEHDDKPVSALVANIPLKNIKDRCM</sequence>
<evidence type="ECO:0000255" key="1">
    <source>
        <dbReference type="HAMAP-Rule" id="MF_00262"/>
    </source>
</evidence>
<feature type="chain" id="PRO_0000298099" description="Cell division topological specificity factor">
    <location>
        <begin position="1"/>
        <end position="94"/>
    </location>
</feature>
<comment type="function">
    <text evidence="1">Prevents the cell division inhibition by proteins MinC and MinD at internal division sites while permitting inhibition at polar sites. This ensures cell division at the proper site by restricting the formation of a division septum at the midpoint of the long axis of the cell.</text>
</comment>
<comment type="similarity">
    <text evidence="1">Belongs to the MinE family.</text>
</comment>
<proteinExistence type="inferred from homology"/>
<reference key="1">
    <citation type="journal article" date="2006" name="Nat. Genet.">
        <title>The multidrug-resistant human pathogen Clostridium difficile has a highly mobile, mosaic genome.</title>
        <authorList>
            <person name="Sebaihia M."/>
            <person name="Wren B.W."/>
            <person name="Mullany P."/>
            <person name="Fairweather N.F."/>
            <person name="Minton N."/>
            <person name="Stabler R."/>
            <person name="Thomson N.R."/>
            <person name="Roberts A.P."/>
            <person name="Cerdeno-Tarraga A.M."/>
            <person name="Wang H."/>
            <person name="Holden M.T.G."/>
            <person name="Wright A."/>
            <person name="Churcher C."/>
            <person name="Quail M.A."/>
            <person name="Baker S."/>
            <person name="Bason N."/>
            <person name="Brooks K."/>
            <person name="Chillingworth T."/>
            <person name="Cronin A."/>
            <person name="Davis P."/>
            <person name="Dowd L."/>
            <person name="Fraser A."/>
            <person name="Feltwell T."/>
            <person name="Hance Z."/>
            <person name="Holroyd S."/>
            <person name="Jagels K."/>
            <person name="Moule S."/>
            <person name="Mungall K."/>
            <person name="Price C."/>
            <person name="Rabbinowitsch E."/>
            <person name="Sharp S."/>
            <person name="Simmonds M."/>
            <person name="Stevens K."/>
            <person name="Unwin L."/>
            <person name="Whithead S."/>
            <person name="Dupuy B."/>
            <person name="Dougan G."/>
            <person name="Barrell B."/>
            <person name="Parkhill J."/>
        </authorList>
    </citation>
    <scope>NUCLEOTIDE SEQUENCE [LARGE SCALE GENOMIC DNA]</scope>
    <source>
        <strain>630</strain>
    </source>
</reference>
<dbReference type="EMBL" id="AM180355">
    <property type="protein sequence ID" value="CAJ68004.1"/>
    <property type="molecule type" value="Genomic_DNA"/>
</dbReference>
<dbReference type="RefSeq" id="WP_003419058.1">
    <property type="nucleotide sequence ID" value="NZ_JAUPES010000006.1"/>
</dbReference>
<dbReference type="RefSeq" id="YP_001087643.1">
    <property type="nucleotide sequence ID" value="NC_009089.1"/>
</dbReference>
<dbReference type="SMR" id="Q18B11"/>
<dbReference type="STRING" id="272563.CD630_11510"/>
<dbReference type="EnsemblBacteria" id="CAJ68004">
    <property type="protein sequence ID" value="CAJ68004"/>
    <property type="gene ID" value="CD630_11510"/>
</dbReference>
<dbReference type="GeneID" id="66353561"/>
<dbReference type="KEGG" id="cdf:CD630_11510"/>
<dbReference type="KEGG" id="pdc:CDIF630_01298"/>
<dbReference type="PATRIC" id="fig|272563.120.peg.1200"/>
<dbReference type="eggNOG" id="COG0851">
    <property type="taxonomic scope" value="Bacteria"/>
</dbReference>
<dbReference type="OrthoDB" id="9796578at2"/>
<dbReference type="PhylomeDB" id="Q18B11"/>
<dbReference type="BioCyc" id="PDIF272563:G12WB-1281-MONOMER"/>
<dbReference type="Proteomes" id="UP000001978">
    <property type="component" value="Chromosome"/>
</dbReference>
<dbReference type="GO" id="GO:0051301">
    <property type="term" value="P:cell division"/>
    <property type="evidence" value="ECO:0007669"/>
    <property type="project" value="UniProtKB-KW"/>
</dbReference>
<dbReference type="GO" id="GO:0032955">
    <property type="term" value="P:regulation of division septum assembly"/>
    <property type="evidence" value="ECO:0007669"/>
    <property type="project" value="InterPro"/>
</dbReference>
<dbReference type="Gene3D" id="3.30.1070.10">
    <property type="entry name" value="Cell division topological specificity factor MinE"/>
    <property type="match status" value="1"/>
</dbReference>
<dbReference type="HAMAP" id="MF_00262">
    <property type="entry name" value="MinE"/>
    <property type="match status" value="1"/>
</dbReference>
<dbReference type="InterPro" id="IPR005527">
    <property type="entry name" value="MinE"/>
</dbReference>
<dbReference type="InterPro" id="IPR036707">
    <property type="entry name" value="MinE_sf"/>
</dbReference>
<dbReference type="NCBIfam" id="TIGR01215">
    <property type="entry name" value="minE"/>
    <property type="match status" value="1"/>
</dbReference>
<dbReference type="Pfam" id="PF03776">
    <property type="entry name" value="MinE"/>
    <property type="match status" value="1"/>
</dbReference>
<dbReference type="SUPFAM" id="SSF55229">
    <property type="entry name" value="Cell division protein MinE topological specificity domain"/>
    <property type="match status" value="1"/>
</dbReference>
<gene>
    <name evidence="1" type="primary">minE</name>
    <name type="ordered locus">CD630_11510</name>
</gene>
<protein>
    <recommendedName>
        <fullName evidence="1">Cell division topological specificity factor</fullName>
    </recommendedName>
</protein>
<organism>
    <name type="scientific">Clostridioides difficile (strain 630)</name>
    <name type="common">Peptoclostridium difficile</name>
    <dbReference type="NCBI Taxonomy" id="272563"/>
    <lineage>
        <taxon>Bacteria</taxon>
        <taxon>Bacillati</taxon>
        <taxon>Bacillota</taxon>
        <taxon>Clostridia</taxon>
        <taxon>Peptostreptococcales</taxon>
        <taxon>Peptostreptococcaceae</taxon>
        <taxon>Clostridioides</taxon>
    </lineage>
</organism>
<accession>Q18B11</accession>